<organism>
    <name type="scientific">Homo sapiens</name>
    <name type="common">Human</name>
    <dbReference type="NCBI Taxonomy" id="9606"/>
    <lineage>
        <taxon>Eukaryota</taxon>
        <taxon>Metazoa</taxon>
        <taxon>Chordata</taxon>
        <taxon>Craniata</taxon>
        <taxon>Vertebrata</taxon>
        <taxon>Euteleostomi</taxon>
        <taxon>Mammalia</taxon>
        <taxon>Eutheria</taxon>
        <taxon>Euarchontoglires</taxon>
        <taxon>Primates</taxon>
        <taxon>Haplorrhini</taxon>
        <taxon>Catarrhini</taxon>
        <taxon>Hominidae</taxon>
        <taxon>Homo</taxon>
    </lineage>
</organism>
<feature type="chain" id="PRO_0000088798" description="Phosphatidylinositol 4-phosphate 3-kinase C2 domain-containing subunit beta">
    <location>
        <begin position="1"/>
        <end position="1634"/>
    </location>
</feature>
<feature type="domain" description="PI3K-RBD" evidence="5">
    <location>
        <begin position="375"/>
        <end position="463"/>
    </location>
</feature>
<feature type="domain" description="C2 PI3K-type" evidence="1 6">
    <location>
        <begin position="635"/>
        <end position="786"/>
    </location>
</feature>
<feature type="domain" description="PIK helical" evidence="4">
    <location>
        <begin position="805"/>
        <end position="981"/>
    </location>
</feature>
<feature type="domain" description="PI3K/PI4K catalytic" evidence="3">
    <location>
        <begin position="1050"/>
        <end position="1328"/>
    </location>
</feature>
<feature type="domain" description="PX" evidence="2">
    <location>
        <begin position="1365"/>
        <end position="1481"/>
    </location>
</feature>
<feature type="domain" description="C2" evidence="1">
    <location>
        <begin position="1504"/>
        <end position="1624"/>
    </location>
</feature>
<feature type="region of interest" description="Interaction with GRB2" evidence="9">
    <location>
        <begin position="2"/>
        <end position="298"/>
    </location>
</feature>
<feature type="region of interest" description="Disordered" evidence="7">
    <location>
        <begin position="45"/>
        <end position="188"/>
    </location>
</feature>
<feature type="region of interest" description="Disordered" evidence="7">
    <location>
        <begin position="259"/>
        <end position="315"/>
    </location>
</feature>
<feature type="region of interest" description="G-loop" evidence="3">
    <location>
        <begin position="1056"/>
        <end position="1062"/>
    </location>
</feature>
<feature type="region of interest" description="Catalytic loop" evidence="3">
    <location>
        <begin position="1192"/>
        <end position="1200"/>
    </location>
</feature>
<feature type="region of interest" description="Activation loop" evidence="3">
    <location>
        <begin position="1211"/>
        <end position="1237"/>
    </location>
</feature>
<feature type="compositionally biased region" description="Polar residues" evidence="7">
    <location>
        <begin position="87"/>
        <end position="112"/>
    </location>
</feature>
<feature type="compositionally biased region" description="Low complexity" evidence="7">
    <location>
        <begin position="176"/>
        <end position="187"/>
    </location>
</feature>
<feature type="compositionally biased region" description="Basic and acidic residues" evidence="7">
    <location>
        <begin position="259"/>
        <end position="270"/>
    </location>
</feature>
<feature type="sequence conflict" description="In Ref. 1; CAA72168." evidence="13" ref="1">
    <original>G</original>
    <variation>D</variation>
    <location>
        <position position="6"/>
    </location>
</feature>
<feature type="sequence conflict" description="In Ref. 2; CAA74194." evidence="13" ref="2">
    <original>P</original>
    <variation>S</variation>
    <location>
        <position position="63"/>
    </location>
</feature>
<feature type="sequence conflict" description="In Ref. 2; CAA74194." evidence="13" ref="2">
    <original>R</original>
    <variation>W</variation>
    <location>
        <position position="75"/>
    </location>
</feature>
<feature type="sequence conflict" description="In Ref. 2; CAA74194." evidence="13" ref="2">
    <original>Q</original>
    <variation>L</variation>
    <location>
        <position position="99"/>
    </location>
</feature>
<feature type="sequence conflict" description="In Ref. 1; CAA72168." evidence="13" ref="1">
    <original>A</original>
    <variation>V</variation>
    <location>
        <position position="246"/>
    </location>
</feature>
<feature type="sequence conflict" description="In Ref. 2; CAA74194." evidence="13" ref="2">
    <original>K</original>
    <variation>E</variation>
    <location>
        <position position="278"/>
    </location>
</feature>
<feature type="sequence conflict" description="In Ref. 2; CAA74194." evidence="13" ref="2">
    <original>P</original>
    <variation>S</variation>
    <location>
        <position position="567"/>
    </location>
</feature>
<feature type="sequence conflict" description="In Ref. 1; CAA72168." evidence="13" ref="1">
    <original>EL</original>
    <variation>DM</variation>
    <location>
        <begin position="664"/>
        <end position="665"/>
    </location>
</feature>
<comment type="function">
    <text evidence="8 9 12">Phosphorylates PtdIns and PtdIns4P with a preference for PtdIns (PubMed:10805725, PubMed:11533253, PubMed:9830063). Does not phosphorylate PtdIns(4,5)P2 (PubMed:9830063). May be involved in EGF and PDGF signaling cascades (PubMed:10805725).</text>
</comment>
<comment type="catalytic activity">
    <reaction evidence="8 12">
        <text>a 1,2-diacyl-sn-glycero-3-phospho-(1D-myo-inositol 4-phosphate) + ATP = a 1,2-diacyl-sn-glycero-3-phospho-(1D-myo-inositol-3,4-bisphosphate) + ADP + H(+)</text>
        <dbReference type="Rhea" id="RHEA:18373"/>
        <dbReference type="ChEBI" id="CHEBI:15378"/>
        <dbReference type="ChEBI" id="CHEBI:30616"/>
        <dbReference type="ChEBI" id="CHEBI:57658"/>
        <dbReference type="ChEBI" id="CHEBI:58178"/>
        <dbReference type="ChEBI" id="CHEBI:456216"/>
        <dbReference type="EC" id="2.7.1.154"/>
    </reaction>
    <physiologicalReaction direction="left-to-right" evidence="14">
        <dbReference type="Rhea" id="RHEA:18374"/>
    </physiologicalReaction>
</comment>
<comment type="catalytic activity">
    <reaction evidence="8 9 12">
        <text>a 1,2-diacyl-sn-glycero-3-phospho-(1D-myo-inositol) + ATP = a 1,2-diacyl-sn-glycero-3-phospho-(1D-myo-inositol-3-phosphate) + ADP + H(+)</text>
        <dbReference type="Rhea" id="RHEA:12709"/>
        <dbReference type="ChEBI" id="CHEBI:15378"/>
        <dbReference type="ChEBI" id="CHEBI:30616"/>
        <dbReference type="ChEBI" id="CHEBI:57880"/>
        <dbReference type="ChEBI" id="CHEBI:58088"/>
        <dbReference type="ChEBI" id="CHEBI:456216"/>
        <dbReference type="EC" id="2.7.1.137"/>
    </reaction>
    <physiologicalReaction direction="left-to-right" evidence="14">
        <dbReference type="Rhea" id="RHEA:12710"/>
    </physiologicalReaction>
</comment>
<comment type="cofactor">
    <cofactor evidence="8 12">
        <name>Ca(2+)</name>
        <dbReference type="ChEBI" id="CHEBI:29108"/>
    </cofactor>
    <cofactor evidence="8 12">
        <name>Mg(2+)</name>
        <dbReference type="ChEBI" id="CHEBI:18420"/>
    </cofactor>
    <cofactor evidence="8">
        <name>Mn(2+)</name>
        <dbReference type="ChEBI" id="CHEBI:29035"/>
    </cofactor>
</comment>
<comment type="activity regulation">
    <text evidence="9">Activated by GRB2.</text>
</comment>
<comment type="biophysicochemical properties">
    <kinetics>
        <KM evidence="12">120 uM for ATP-Mg(2+)</KM>
        <KM evidence="12">120 uM for ATP-Ca(2+)</KM>
        <Vmax evidence="12">737.0 nmol/min/mg enzyme for ATP-Mg(2+)</Vmax>
        <Vmax evidence="12">737.0 nmol/min/mg enzyme for ATP-Ca(2+)</Vmax>
    </kinetics>
</comment>
<comment type="subunit">
    <text evidence="8 9">Part of a complex with ERBB2 and EGFR. Part of a complex with phosphorylated EGFR and GRB2. Interacts with phosphorylated EGFR and PDGFR, maybe indirectly. Interacts with GRB2.</text>
</comment>
<comment type="interaction">
    <interactant intactId="EBI-641107">
        <id>O00750</id>
    </interactant>
    <interactant intactId="EBI-297353">
        <id>P00533</id>
        <label>EGFR</label>
    </interactant>
    <organismsDiffer>false</organismsDiffer>
    <experiments>10</experiments>
</comment>
<comment type="interaction">
    <interactant intactId="EBI-641107">
        <id>O00750</id>
    </interactant>
    <interactant intactId="EBI-641062">
        <id>P04626</id>
        <label>ERBB2</label>
    </interactant>
    <organismsDiffer>false</organismsDiffer>
    <experiments>2</experiments>
</comment>
<comment type="interaction">
    <interactant intactId="EBI-641107">
        <id>O00750</id>
    </interactant>
    <interactant intactId="EBI-401755">
        <id>P62993</id>
        <label>GRB2</label>
    </interactant>
    <organismsDiffer>false</organismsDiffer>
    <experiments>6</experiments>
</comment>
<comment type="interaction">
    <interactant intactId="EBI-641107">
        <id>O00750</id>
    </interactant>
    <interactant intactId="EBI-389883">
        <id>P16333</id>
        <label>NCK1</label>
    </interactant>
    <organismsDiffer>false</organismsDiffer>
    <experiments>3</experiments>
</comment>
<comment type="interaction">
    <interactant intactId="EBI-641107">
        <id>O00750</id>
    </interactant>
    <interactant intactId="EBI-476295">
        <id>P31947</id>
        <label>SFN</label>
    </interactant>
    <organismsDiffer>false</organismsDiffer>
    <experiments>4</experiments>
</comment>
<comment type="interaction">
    <interactant intactId="EBI-641107">
        <id>O00750</id>
    </interactant>
    <interactant intactId="EBI-719493">
        <id>P14373</id>
        <label>TRIM27</label>
    </interactant>
    <organismsDiffer>false</organismsDiffer>
    <experiments>5</experiments>
</comment>
<comment type="interaction">
    <interactant intactId="EBI-641107">
        <id>O00750</id>
    </interactant>
    <interactant intactId="EBI-347088">
        <id>P63104</id>
        <label>YWHAZ</label>
    </interactant>
    <organismsDiffer>false</organismsDiffer>
    <experiments>5</experiments>
</comment>
<comment type="subcellular location">
    <subcellularLocation>
        <location evidence="10 12">Microsome</location>
    </subcellularLocation>
    <subcellularLocation>
        <location evidence="10 12">Cell membrane</location>
    </subcellularLocation>
    <subcellularLocation>
        <location evidence="10 12">Cytoplasm</location>
        <location evidence="10 12">Cytosol</location>
    </subcellularLocation>
    <subcellularLocation>
        <location evidence="10">Nucleus</location>
    </subcellularLocation>
    <subcellularLocation>
        <location evidence="10">Endoplasmic reticulum</location>
    </subcellularLocation>
    <text>Found mostly in the microsome, but also in the plasma membrane and cytosol. Nuclear in testis.</text>
</comment>
<comment type="tissue specificity">
    <text evidence="10 11">Expressed in columnar and transitional epithelia, mononuclear cells, and ganglion cells (at protein level). Widely expressed, with highest levels in thymus and placenta and lowest in peripheral blood, skeletal muscle and kidney.</text>
</comment>
<comment type="similarity">
    <text evidence="5 6">Belongs to the PI3/PI4-kinase family.</text>
</comment>
<comment type="caution">
    <text evidence="13">It is uncertain whether Met-1 or Met-26 is the initiator.</text>
</comment>
<comment type="sequence caution" evidence="13">
    <conflict type="erroneous initiation">
        <sequence resource="EMBL-CDS" id="CAA74194"/>
    </conflict>
</comment>
<gene>
    <name type="primary">PIK3C2B</name>
</gene>
<keyword id="KW-0067">ATP-binding</keyword>
<keyword id="KW-1003">Cell membrane</keyword>
<keyword id="KW-0963">Cytoplasm</keyword>
<keyword id="KW-0256">Endoplasmic reticulum</keyword>
<keyword id="KW-0418">Kinase</keyword>
<keyword id="KW-0443">Lipid metabolism</keyword>
<keyword id="KW-0472">Membrane</keyword>
<keyword id="KW-0492">Microsome</keyword>
<keyword id="KW-0547">Nucleotide-binding</keyword>
<keyword id="KW-0539">Nucleus</keyword>
<keyword id="KW-1267">Proteomics identification</keyword>
<keyword id="KW-1185">Reference proteome</keyword>
<keyword id="KW-0808">Transferase</keyword>
<sequence length="1634" mass="184768">MSSTQGNGEHWKSLESVGISRKELAMAEALQMEYDALSRLRHDKEENRAKQNADPSLISWDEPGVDFYSKPAGRRTDLKLLRGLSGSDPTLNYNSLSPQEGPPNHSTSQGPQPGSDPWPKGSLSGDYLYIFDGSDGGVSSSPGPGDIEGSCKKLSPPPLPPRASIWDTPPLPPRKGSPSSSKISQPSDINTFSLVEQLPGKLLEHRILEEEEVLGGGGQGRLLGSVDYDGINDAITRLNLKSTYDAEMLRDATRGWKEGRGPLDFSKDTSGKPVARSKTMPPQVPPRTYASRYGNRKNATPGKNRRISAAPVGSRPHTVANGHELFEVSEERDEEVAAFCHMLDILRSGSDIQDYFLTGYVWSAVTPSPEHLGDEVNLKVTVLCDRLQEALTFTCNCSSTVDLLIYQTLCYTHDDLRNVDVGDFVLKPCGLEEFLQNKHALGSHEYIQYCRKFDIDIRLQLMEQKVVRSDLARTVNDDQSPSTLNYLVHLQERPVKQTISRQALSLLFDTYHNEVDAFLLADGDFPLKADRVVQSVKAICNALAAVETPEITSALNQLPPCPSRMQPKIQKDPSVLAVRENREKVVEALTAAILDLVELYCNTFNADFQTAVPGSRKHDLVQEACHFARSLAFTVYATHRIPIIWATSYEDFYLSCSLSHGGKELCSPLQTRRAHFSKYLFHLIVWDQQICFPVQVNRLPRETLLCATLYALPIPPPGSSSEANKQRRVPEALGWVTTPLFNFRQVLTCGRKLLGLWPATQENPSARWSAPNFHQPDSVILQIDFPTSAFDIKFTSPPGDKFSPRYEFGSLREEDQRKLKDIMQKESLYWLTDADKKRLWEKRYYCHSEVSSLPLVLASAPSWEWACLPDIYVLLKQWTHMNHQDALGLLHATFPDQEVRRMAVQWIGSLSDAELLDYLPQLVQALKYECYLDSPLVRFLLKRAVSDLRVTHYFFWLLKDGLKDSQFSIRYQYLLAALLCCCGKGLREEFNRQCWLVNALAKLAQQVREAAPSARQGILRTGLEEVKQFFALNGSCRLPLSPSLLVKGIVPRDCSYFNSNAVPLKLSFQNVDPLGENIRVIFKCGDDLRQDMLTLQMIRIMSKIWVQEGLDMRMVIFRCFSTGRGRGMVEMIPNAETLRKIQVEHGVTGSFKDRPLADWLQKHNPGEDEYEKAVENFIYSCAGCCVATYVLGICDRHNDNIMLKTTGHMFHIDFGRFLGHAQMFGNIKRDRAPFVFTSDMAYVINGGDKPSSRFHDFVDLCCQAYNLIRKHTHLFLNLLGLMLSCGIPELSDLEDLKYVYDALRPQDTEANATTYFTRLIESSLGSVATKLNFFIHNLAQMKFTGSDDRLTLSFASRTHTLKSSGRISDVFLCRHEKIFHPNKGYIYVVKVMRENTHEATYIQRTFEEFQELHNKLRLLFPSSHLPSFPSRFVIGRSRGEAVAERRREELNGYIWHLIHAPPEVAECDLVYTFFHPLPRDEKAMGTSPAPKSSDGTWARPVGKVGGEVKLSISYKNNKLFIMVMHIRGLQLLQDGNDPDPYVKIYLLPDPQKTTKRKTKVARKTCNPTYNEMLVYDGIPKGDLQQRELQLSVLSEQGFWENVLLGEVNIRLRELDLAQEKTGWFALGSRSHGTL</sequence>
<protein>
    <recommendedName>
        <fullName>Phosphatidylinositol 4-phosphate 3-kinase C2 domain-containing subunit beta</fullName>
        <shortName>PI3K-C2-beta</shortName>
        <shortName>PtdIns-3-kinase C2 subunit beta</shortName>
        <ecNumber evidence="8 9 12">2.7.1.137</ecNumber>
        <ecNumber evidence="8 12">2.7.1.154</ecNumber>
    </recommendedName>
    <alternativeName>
        <fullName>C2-PI3K</fullName>
    </alternativeName>
    <alternativeName>
        <fullName>Phosphoinositide 3-kinase-C2-beta</fullName>
    </alternativeName>
</protein>
<reference key="1">
    <citation type="journal article" date="1997" name="Biochem. Biophys. Res. Commun.">
        <title>Identification and cDNA cloning of a novel mammalian C2 domain-containing phosphoinositide 3-kinase, HsC2-PI3K.</title>
        <authorList>
            <person name="Brown R.A."/>
            <person name="Ho L.K.F."/>
            <person name="Weber-Hall S.J."/>
            <person name="Shipley J.M."/>
            <person name="Fry M.J."/>
        </authorList>
    </citation>
    <scope>NUCLEOTIDE SEQUENCE [MRNA]</scope>
    <scope>TISSUE SPECIFICITY</scope>
    <source>
        <tissue>Mammary gland</tissue>
    </source>
</reference>
<reference key="2">
    <citation type="journal article" date="1998" name="J. Biol. Chem.">
        <title>Human phosphoinositide 3-kinase C2beta, the role of calcium and the C2 domain in enzyme activity.</title>
        <authorList>
            <person name="Arcaro A."/>
            <person name="Volinia S."/>
            <person name="Zvelebil M.J."/>
            <person name="Stein R.C."/>
            <person name="Watton S.J."/>
            <person name="Layton M.J."/>
            <person name="Gout I."/>
            <person name="Ahmadi K."/>
            <person name="Downward J."/>
            <person name="Waterfield M.D."/>
        </authorList>
    </citation>
    <scope>NUCLEOTIDE SEQUENCE [MRNA]</scope>
    <scope>FUNCTION</scope>
    <scope>CATALYTIC ACTIVITY</scope>
    <scope>BIOPHYSICOCHEMICAL PROPERTIES</scope>
    <scope>SUBCELLULAR LOCATION</scope>
    <scope>COFACTOR</scope>
    <source>
        <tissue>Monocyte</tissue>
    </source>
</reference>
<reference key="3">
    <citation type="journal article" date="2006" name="Nature">
        <title>The DNA sequence and biological annotation of human chromosome 1.</title>
        <authorList>
            <person name="Gregory S.G."/>
            <person name="Barlow K.F."/>
            <person name="McLay K.E."/>
            <person name="Kaul R."/>
            <person name="Swarbreck D."/>
            <person name="Dunham A."/>
            <person name="Scott C.E."/>
            <person name="Howe K.L."/>
            <person name="Woodfine K."/>
            <person name="Spencer C.C.A."/>
            <person name="Jones M.C."/>
            <person name="Gillson C."/>
            <person name="Searle S."/>
            <person name="Zhou Y."/>
            <person name="Kokocinski F."/>
            <person name="McDonald L."/>
            <person name="Evans R."/>
            <person name="Phillips K."/>
            <person name="Atkinson A."/>
            <person name="Cooper R."/>
            <person name="Jones C."/>
            <person name="Hall R.E."/>
            <person name="Andrews T.D."/>
            <person name="Lloyd C."/>
            <person name="Ainscough R."/>
            <person name="Almeida J.P."/>
            <person name="Ambrose K.D."/>
            <person name="Anderson F."/>
            <person name="Andrew R.W."/>
            <person name="Ashwell R.I.S."/>
            <person name="Aubin K."/>
            <person name="Babbage A.K."/>
            <person name="Bagguley C.L."/>
            <person name="Bailey J."/>
            <person name="Beasley H."/>
            <person name="Bethel G."/>
            <person name="Bird C.P."/>
            <person name="Bray-Allen S."/>
            <person name="Brown J.Y."/>
            <person name="Brown A.J."/>
            <person name="Buckley D."/>
            <person name="Burton J."/>
            <person name="Bye J."/>
            <person name="Carder C."/>
            <person name="Chapman J.C."/>
            <person name="Clark S.Y."/>
            <person name="Clarke G."/>
            <person name="Clee C."/>
            <person name="Cobley V."/>
            <person name="Collier R.E."/>
            <person name="Corby N."/>
            <person name="Coville G.J."/>
            <person name="Davies J."/>
            <person name="Deadman R."/>
            <person name="Dunn M."/>
            <person name="Earthrowl M."/>
            <person name="Ellington A.G."/>
            <person name="Errington H."/>
            <person name="Frankish A."/>
            <person name="Frankland J."/>
            <person name="French L."/>
            <person name="Garner P."/>
            <person name="Garnett J."/>
            <person name="Gay L."/>
            <person name="Ghori M.R.J."/>
            <person name="Gibson R."/>
            <person name="Gilby L.M."/>
            <person name="Gillett W."/>
            <person name="Glithero R.J."/>
            <person name="Grafham D.V."/>
            <person name="Griffiths C."/>
            <person name="Griffiths-Jones S."/>
            <person name="Grocock R."/>
            <person name="Hammond S."/>
            <person name="Harrison E.S.I."/>
            <person name="Hart E."/>
            <person name="Haugen E."/>
            <person name="Heath P.D."/>
            <person name="Holmes S."/>
            <person name="Holt K."/>
            <person name="Howden P.J."/>
            <person name="Hunt A.R."/>
            <person name="Hunt S.E."/>
            <person name="Hunter G."/>
            <person name="Isherwood J."/>
            <person name="James R."/>
            <person name="Johnson C."/>
            <person name="Johnson D."/>
            <person name="Joy A."/>
            <person name="Kay M."/>
            <person name="Kershaw J.K."/>
            <person name="Kibukawa M."/>
            <person name="Kimberley A.M."/>
            <person name="King A."/>
            <person name="Knights A.J."/>
            <person name="Lad H."/>
            <person name="Laird G."/>
            <person name="Lawlor S."/>
            <person name="Leongamornlert D.A."/>
            <person name="Lloyd D.M."/>
            <person name="Loveland J."/>
            <person name="Lovell J."/>
            <person name="Lush M.J."/>
            <person name="Lyne R."/>
            <person name="Martin S."/>
            <person name="Mashreghi-Mohammadi M."/>
            <person name="Matthews L."/>
            <person name="Matthews N.S.W."/>
            <person name="McLaren S."/>
            <person name="Milne S."/>
            <person name="Mistry S."/>
            <person name="Moore M.J.F."/>
            <person name="Nickerson T."/>
            <person name="O'Dell C.N."/>
            <person name="Oliver K."/>
            <person name="Palmeiri A."/>
            <person name="Palmer S.A."/>
            <person name="Parker A."/>
            <person name="Patel D."/>
            <person name="Pearce A.V."/>
            <person name="Peck A.I."/>
            <person name="Pelan S."/>
            <person name="Phelps K."/>
            <person name="Phillimore B.J."/>
            <person name="Plumb R."/>
            <person name="Rajan J."/>
            <person name="Raymond C."/>
            <person name="Rouse G."/>
            <person name="Saenphimmachak C."/>
            <person name="Sehra H.K."/>
            <person name="Sheridan E."/>
            <person name="Shownkeen R."/>
            <person name="Sims S."/>
            <person name="Skuce C.D."/>
            <person name="Smith M."/>
            <person name="Steward C."/>
            <person name="Subramanian S."/>
            <person name="Sycamore N."/>
            <person name="Tracey A."/>
            <person name="Tromans A."/>
            <person name="Van Helmond Z."/>
            <person name="Wall M."/>
            <person name="Wallis J.M."/>
            <person name="White S."/>
            <person name="Whitehead S.L."/>
            <person name="Wilkinson J.E."/>
            <person name="Willey D.L."/>
            <person name="Williams H."/>
            <person name="Wilming L."/>
            <person name="Wray P.W."/>
            <person name="Wu Z."/>
            <person name="Coulson A."/>
            <person name="Vaudin M."/>
            <person name="Sulston J.E."/>
            <person name="Durbin R.M."/>
            <person name="Hubbard T."/>
            <person name="Wooster R."/>
            <person name="Dunham I."/>
            <person name="Carter N.P."/>
            <person name="McVean G."/>
            <person name="Ross M.T."/>
            <person name="Harrow J."/>
            <person name="Olson M.V."/>
            <person name="Beck S."/>
            <person name="Rogers J."/>
            <person name="Bentley D.R."/>
        </authorList>
    </citation>
    <scope>NUCLEOTIDE SEQUENCE [LARGE SCALE GENOMIC DNA]</scope>
</reference>
<reference key="4">
    <citation type="journal article" date="2000" name="Mol. Cell. Biol.">
        <title>Class II phosphoinositide 3-kinases are downstream targets of activated polypeptide growth factor receptors.</title>
        <authorList>
            <person name="Arcaro A."/>
            <person name="Zvelebil M.J."/>
            <person name="Wallasch C."/>
            <person name="Ullrich A."/>
            <person name="Waterfield M.D."/>
            <person name="Domin J."/>
        </authorList>
    </citation>
    <scope>IDENTIFICATION IN A COMPLEX WITH ERBB2 AND EGFR</scope>
    <scope>INTERACTION WITH EGFR AND PDGFR</scope>
    <scope>COFACTOR</scope>
    <scope>FUNCTION</scope>
    <scope>CATALYTIC ACTIVITY</scope>
</reference>
<reference key="5">
    <citation type="journal article" date="2001" name="Mol. Cell. Biol.">
        <title>Recruitment of the class II phosphoinositide 3-kinase C2beta to the epidermal growth factor receptor: role of Grb2.</title>
        <authorList>
            <person name="Wheeler M."/>
            <person name="Domin J."/>
        </authorList>
    </citation>
    <scope>IDENTIFICATION IN A COMPLEX WITH GRB2 AND EGFR</scope>
    <scope>INTERACTION WITH GRB2</scope>
    <scope>ACTIVITY REGULATION</scope>
    <scope>FUNCTION</scope>
    <scope>CATALYTIC ACTIVITY</scope>
</reference>
<reference key="6">
    <citation type="journal article" date="2003" name="BMC Clin. Pathol.">
        <title>Topographical expression of class IA and class II phosphoinositide 3-kinase enzymes in normal human tissues is consistent with a role in differentiation.</title>
        <authorList>
            <person name="El Sheikh S.S."/>
            <person name="Domin J."/>
            <person name="Tomtitchong P."/>
            <person name="Abel P."/>
            <person name="Stamp G."/>
            <person name="Lalani E.-N."/>
        </authorList>
    </citation>
    <scope>TISSUE SPECIFICITY</scope>
    <scope>SUBCELLULAR LOCATION</scope>
</reference>
<reference key="7">
    <citation type="journal article" date="2008" name="Proc. Natl. Acad. Sci. U.S.A.">
        <title>A quantitative atlas of mitotic phosphorylation.</title>
        <authorList>
            <person name="Dephoure N."/>
            <person name="Zhou C."/>
            <person name="Villen J."/>
            <person name="Beausoleil S.A."/>
            <person name="Bakalarski C.E."/>
            <person name="Elledge S.J."/>
            <person name="Gygi S.P."/>
        </authorList>
    </citation>
    <scope>IDENTIFICATION BY MASS SPECTROMETRY [LARGE SCALE ANALYSIS]</scope>
    <source>
        <tissue>Cervix carcinoma</tissue>
    </source>
</reference>
<name>P3C2B_HUMAN</name>
<accession>O00750</accession>
<accession>O95666</accession>
<accession>Q5SW99</accession>
<dbReference type="EC" id="2.7.1.137" evidence="8 9 12"/>
<dbReference type="EC" id="2.7.1.154" evidence="8 12"/>
<dbReference type="EMBL" id="Y11312">
    <property type="protein sequence ID" value="CAA72168.1"/>
    <property type="molecule type" value="mRNA"/>
</dbReference>
<dbReference type="EMBL" id="Y13892">
    <property type="protein sequence ID" value="CAA74194.1"/>
    <property type="status" value="ALT_INIT"/>
    <property type="molecule type" value="mRNA"/>
</dbReference>
<dbReference type="EMBL" id="AL606489">
    <property type="status" value="NOT_ANNOTATED_CDS"/>
    <property type="molecule type" value="Genomic_DNA"/>
</dbReference>
<dbReference type="CCDS" id="CCDS1446.1"/>
<dbReference type="PIR" id="JC5500">
    <property type="entry name" value="JC5500"/>
</dbReference>
<dbReference type="PIR" id="PC4346">
    <property type="entry name" value="PC4346"/>
</dbReference>
<dbReference type="RefSeq" id="NP_001364263.1">
    <property type="nucleotide sequence ID" value="NM_001377334.1"/>
</dbReference>
<dbReference type="RefSeq" id="NP_002637.3">
    <property type="nucleotide sequence ID" value="NM_002646.3"/>
</dbReference>
<dbReference type="RefSeq" id="XP_005245314.1">
    <property type="nucleotide sequence ID" value="XM_005245257.2"/>
</dbReference>
<dbReference type="RefSeq" id="XP_011507932.1">
    <property type="nucleotide sequence ID" value="XM_011509630.2"/>
</dbReference>
<dbReference type="RefSeq" id="XP_011507933.1">
    <property type="nucleotide sequence ID" value="XM_011509631.2"/>
</dbReference>
<dbReference type="RefSeq" id="XP_016856962.1">
    <property type="nucleotide sequence ID" value="XM_017001473.1"/>
</dbReference>
<dbReference type="RefSeq" id="XP_016856963.1">
    <property type="nucleotide sequence ID" value="XM_017001474.1"/>
</dbReference>
<dbReference type="SMR" id="O00750"/>
<dbReference type="BioGRID" id="111305">
    <property type="interactions" value="54"/>
</dbReference>
<dbReference type="CORUM" id="O00750"/>
<dbReference type="FunCoup" id="O00750">
    <property type="interactions" value="1781"/>
</dbReference>
<dbReference type="IntAct" id="O00750">
    <property type="interactions" value="33"/>
</dbReference>
<dbReference type="MINT" id="O00750"/>
<dbReference type="STRING" id="9606.ENSP00000356155"/>
<dbReference type="BindingDB" id="O00750"/>
<dbReference type="ChEMBL" id="CHEMBL5554"/>
<dbReference type="DrugBank" id="DB12010">
    <property type="generic name" value="Fostamatinib"/>
</dbReference>
<dbReference type="DrugCentral" id="O00750"/>
<dbReference type="GuidetoPHARMACOLOGY" id="2151"/>
<dbReference type="SwissLipids" id="SLP:000000893"/>
<dbReference type="CarbonylDB" id="O00750"/>
<dbReference type="GlyGen" id="O00750">
    <property type="glycosylation" value="2 sites, 1 N-linked glycan (1 site)"/>
</dbReference>
<dbReference type="iPTMnet" id="O00750"/>
<dbReference type="PhosphoSitePlus" id="O00750"/>
<dbReference type="BioMuta" id="PIK3C2B"/>
<dbReference type="CPTAC" id="non-CPTAC-5672"/>
<dbReference type="CPTAC" id="non-CPTAC-5673"/>
<dbReference type="jPOST" id="O00750"/>
<dbReference type="MassIVE" id="O00750"/>
<dbReference type="PaxDb" id="9606-ENSP00000356155"/>
<dbReference type="PeptideAtlas" id="O00750"/>
<dbReference type="ProteomicsDB" id="48017"/>
<dbReference type="Pumba" id="O00750"/>
<dbReference type="Antibodypedia" id="34558">
    <property type="antibodies" value="238 antibodies from 29 providers"/>
</dbReference>
<dbReference type="DNASU" id="5287"/>
<dbReference type="Ensembl" id="ENST00000367187.7">
    <property type="protein sequence ID" value="ENSP00000356155.3"/>
    <property type="gene ID" value="ENSG00000133056.14"/>
</dbReference>
<dbReference type="Ensembl" id="ENST00000684373.1">
    <property type="protein sequence ID" value="ENSP00000507222.1"/>
    <property type="gene ID" value="ENSG00000133056.14"/>
</dbReference>
<dbReference type="GeneID" id="5287"/>
<dbReference type="KEGG" id="hsa:5287"/>
<dbReference type="MANE-Select" id="ENST00000684373.1">
    <property type="protein sequence ID" value="ENSP00000507222.1"/>
    <property type="RefSeq nucleotide sequence ID" value="NM_001377334.1"/>
    <property type="RefSeq protein sequence ID" value="NP_001364263.1"/>
</dbReference>
<dbReference type="UCSC" id="uc001haw.4">
    <property type="organism name" value="human"/>
</dbReference>
<dbReference type="AGR" id="HGNC:8972"/>
<dbReference type="CTD" id="5287"/>
<dbReference type="DisGeNET" id="5287"/>
<dbReference type="GeneCards" id="PIK3C2B"/>
<dbReference type="HGNC" id="HGNC:8972">
    <property type="gene designation" value="PIK3C2B"/>
</dbReference>
<dbReference type="HPA" id="ENSG00000133056">
    <property type="expression patterns" value="Low tissue specificity"/>
</dbReference>
<dbReference type="MIM" id="602838">
    <property type="type" value="gene"/>
</dbReference>
<dbReference type="neXtProt" id="NX_O00750"/>
<dbReference type="OpenTargets" id="ENSG00000133056"/>
<dbReference type="PharmGKB" id="PA33305"/>
<dbReference type="VEuPathDB" id="HostDB:ENSG00000133056"/>
<dbReference type="eggNOG" id="KOG0905">
    <property type="taxonomic scope" value="Eukaryota"/>
</dbReference>
<dbReference type="GeneTree" id="ENSGT00940000158263"/>
<dbReference type="HOGENOM" id="CLU_002191_0_0_1"/>
<dbReference type="InParanoid" id="O00750"/>
<dbReference type="OMA" id="QMAAGFR"/>
<dbReference type="OrthoDB" id="67688at2759"/>
<dbReference type="PAN-GO" id="O00750">
    <property type="GO annotations" value="8 GO annotations based on evolutionary models"/>
</dbReference>
<dbReference type="PhylomeDB" id="O00750"/>
<dbReference type="TreeFam" id="TF102031"/>
<dbReference type="BioCyc" id="MetaCyc:HS05725-MONOMER"/>
<dbReference type="BRENDA" id="2.7.1.137">
    <property type="organism ID" value="2681"/>
</dbReference>
<dbReference type="BRENDA" id="2.7.1.154">
    <property type="organism ID" value="2681"/>
</dbReference>
<dbReference type="PathwayCommons" id="O00750"/>
<dbReference type="Reactome" id="R-HSA-1660499">
    <property type="pathway name" value="Synthesis of PIPs at the plasma membrane"/>
</dbReference>
<dbReference type="SignaLink" id="O00750"/>
<dbReference type="SIGNOR" id="O00750"/>
<dbReference type="BioGRID-ORCS" id="5287">
    <property type="hits" value="16 hits in 1159 CRISPR screens"/>
</dbReference>
<dbReference type="ChiTaRS" id="PIK3C2B">
    <property type="organism name" value="human"/>
</dbReference>
<dbReference type="GeneWiki" id="PIK3C2B"/>
<dbReference type="GenomeRNAi" id="5287"/>
<dbReference type="Pharos" id="O00750">
    <property type="development level" value="Tchem"/>
</dbReference>
<dbReference type="PRO" id="PR:O00750"/>
<dbReference type="Proteomes" id="UP000005640">
    <property type="component" value="Chromosome 1"/>
</dbReference>
<dbReference type="RNAct" id="O00750">
    <property type="molecule type" value="protein"/>
</dbReference>
<dbReference type="Bgee" id="ENSG00000133056">
    <property type="expression patterns" value="Expressed in pancreatic ductal cell and 209 other cell types or tissues"/>
</dbReference>
<dbReference type="ExpressionAtlas" id="O00750">
    <property type="expression patterns" value="baseline and differential"/>
</dbReference>
<dbReference type="GO" id="GO:0005737">
    <property type="term" value="C:cytoplasm"/>
    <property type="evidence" value="ECO:0000318"/>
    <property type="project" value="GO_Central"/>
</dbReference>
<dbReference type="GO" id="GO:0005829">
    <property type="term" value="C:cytosol"/>
    <property type="evidence" value="ECO:0000314"/>
    <property type="project" value="UniProtKB"/>
</dbReference>
<dbReference type="GO" id="GO:0030139">
    <property type="term" value="C:endocytic vesicle"/>
    <property type="evidence" value="ECO:0007669"/>
    <property type="project" value="Ensembl"/>
</dbReference>
<dbReference type="GO" id="GO:0005783">
    <property type="term" value="C:endoplasmic reticulum"/>
    <property type="evidence" value="ECO:0007669"/>
    <property type="project" value="UniProtKB-SubCell"/>
</dbReference>
<dbReference type="GO" id="GO:0043231">
    <property type="term" value="C:intracellular membrane-bounded organelle"/>
    <property type="evidence" value="ECO:0000314"/>
    <property type="project" value="UniProtKB"/>
</dbReference>
<dbReference type="GO" id="GO:0031965">
    <property type="term" value="C:nuclear membrane"/>
    <property type="evidence" value="ECO:0000314"/>
    <property type="project" value="HPA"/>
</dbReference>
<dbReference type="GO" id="GO:0005654">
    <property type="term" value="C:nucleoplasm"/>
    <property type="evidence" value="ECO:0000314"/>
    <property type="project" value="HPA"/>
</dbReference>
<dbReference type="GO" id="GO:0005886">
    <property type="term" value="C:plasma membrane"/>
    <property type="evidence" value="ECO:0000314"/>
    <property type="project" value="UniProtKB"/>
</dbReference>
<dbReference type="GO" id="GO:0016303">
    <property type="term" value="F:1-phosphatidylinositol-3-kinase activity"/>
    <property type="evidence" value="ECO:0000314"/>
    <property type="project" value="UniProtKB"/>
</dbReference>
<dbReference type="GO" id="GO:0035005">
    <property type="term" value="F:1-phosphatidylinositol-4-phosphate 3-kinase activity"/>
    <property type="evidence" value="ECO:0000314"/>
    <property type="project" value="UniProtKB"/>
</dbReference>
<dbReference type="GO" id="GO:0005524">
    <property type="term" value="F:ATP binding"/>
    <property type="evidence" value="ECO:0007669"/>
    <property type="project" value="UniProtKB-KW"/>
</dbReference>
<dbReference type="GO" id="GO:0035091">
    <property type="term" value="F:phosphatidylinositol binding"/>
    <property type="evidence" value="ECO:0007669"/>
    <property type="project" value="InterPro"/>
</dbReference>
<dbReference type="GO" id="GO:1905037">
    <property type="term" value="P:autophagosome organization"/>
    <property type="evidence" value="ECO:0007669"/>
    <property type="project" value="Ensembl"/>
</dbReference>
<dbReference type="GO" id="GO:0016477">
    <property type="term" value="P:cell migration"/>
    <property type="evidence" value="ECO:0000318"/>
    <property type="project" value="GO_Central"/>
</dbReference>
<dbReference type="GO" id="GO:0009267">
    <property type="term" value="P:cellular response to starvation"/>
    <property type="evidence" value="ECO:0007669"/>
    <property type="project" value="Ensembl"/>
</dbReference>
<dbReference type="GO" id="GO:0043491">
    <property type="term" value="P:phosphatidylinositol 3-kinase/protein kinase B signal transduction"/>
    <property type="evidence" value="ECO:0000318"/>
    <property type="project" value="GO_Central"/>
</dbReference>
<dbReference type="GO" id="GO:0036092">
    <property type="term" value="P:phosphatidylinositol-3-phosphate biosynthetic process"/>
    <property type="evidence" value="ECO:0000318"/>
    <property type="project" value="GO_Central"/>
</dbReference>
<dbReference type="GO" id="GO:0048015">
    <property type="term" value="P:phosphatidylinositol-mediated signaling"/>
    <property type="evidence" value="ECO:0000318"/>
    <property type="project" value="GO_Central"/>
</dbReference>
<dbReference type="CDD" id="cd04012">
    <property type="entry name" value="C2A_PI3K_class_II"/>
    <property type="match status" value="1"/>
</dbReference>
<dbReference type="CDD" id="cd08381">
    <property type="entry name" value="C2B_PI3K_class_II"/>
    <property type="match status" value="1"/>
</dbReference>
<dbReference type="CDD" id="cd00869">
    <property type="entry name" value="PI3Ka_II"/>
    <property type="match status" value="1"/>
</dbReference>
<dbReference type="CDD" id="cd00895">
    <property type="entry name" value="PI3Kc_C2_beta"/>
    <property type="match status" value="1"/>
</dbReference>
<dbReference type="CDD" id="cd07290">
    <property type="entry name" value="PX_PI3K_C2_beta"/>
    <property type="match status" value="1"/>
</dbReference>
<dbReference type="FunFam" id="3.30.1520.10:FF:000006">
    <property type="entry name" value="Phosphatidylinositol 4-phosphate 3-kinase C2 domain-containing subunit alpha"/>
    <property type="match status" value="1"/>
</dbReference>
<dbReference type="FunFam" id="1.10.1070.11:FF:000003">
    <property type="entry name" value="Phosphatidylinositol 4-phosphate 3-kinase C2 domain-containing subunit beta"/>
    <property type="match status" value="1"/>
</dbReference>
<dbReference type="FunFam" id="1.25.40.70:FF:000005">
    <property type="entry name" value="Phosphatidylinositol 4-phosphate 3-kinase C2 domain-containing subunit beta"/>
    <property type="match status" value="1"/>
</dbReference>
<dbReference type="FunFam" id="3.30.1010.10:FF:000001">
    <property type="entry name" value="Phosphatidylinositol 4-phosphate 3-kinase C2 domain-containing subunit beta"/>
    <property type="match status" value="1"/>
</dbReference>
<dbReference type="FunFam" id="2.60.40.150:FF:000036">
    <property type="entry name" value="phosphatidylinositol 4-phosphate 3-kinase C2 domain-containing subunit beta"/>
    <property type="match status" value="1"/>
</dbReference>
<dbReference type="FunFam" id="2.60.40.150:FF:000065">
    <property type="entry name" value="phosphatidylinositol 4-phosphate 3-kinase C2 domain-containing subunit beta"/>
    <property type="match status" value="1"/>
</dbReference>
<dbReference type="FunFam" id="3.10.20.90:FF:000105">
    <property type="entry name" value="phosphatidylinositol 4-phosphate 3-kinase C2 domain-containing subunit beta"/>
    <property type="match status" value="1"/>
</dbReference>
<dbReference type="Gene3D" id="2.60.40.150">
    <property type="entry name" value="C2 domain"/>
    <property type="match status" value="2"/>
</dbReference>
<dbReference type="Gene3D" id="1.10.1070.11">
    <property type="entry name" value="Phosphatidylinositol 3-/4-kinase, catalytic domain"/>
    <property type="match status" value="1"/>
</dbReference>
<dbReference type="Gene3D" id="3.10.20.90">
    <property type="entry name" value="Phosphatidylinositol 3-kinase Catalytic Subunit, Chain A, domain 1"/>
    <property type="match status" value="1"/>
</dbReference>
<dbReference type="Gene3D" id="3.30.1010.10">
    <property type="entry name" value="Phosphatidylinositol 3-kinase Catalytic Subunit, Chain A, domain 4"/>
    <property type="match status" value="1"/>
</dbReference>
<dbReference type="Gene3D" id="1.25.40.70">
    <property type="entry name" value="Phosphatidylinositol 3-kinase, accessory domain (PIK)"/>
    <property type="match status" value="1"/>
</dbReference>
<dbReference type="Gene3D" id="3.30.1520.10">
    <property type="entry name" value="Phox-like domain"/>
    <property type="match status" value="1"/>
</dbReference>
<dbReference type="InterPro" id="IPR016024">
    <property type="entry name" value="ARM-type_fold"/>
</dbReference>
<dbReference type="InterPro" id="IPR000008">
    <property type="entry name" value="C2_dom"/>
</dbReference>
<dbReference type="InterPro" id="IPR035892">
    <property type="entry name" value="C2_domain_sf"/>
</dbReference>
<dbReference type="InterPro" id="IPR011009">
    <property type="entry name" value="Kinase-like_dom_sf"/>
</dbReference>
<dbReference type="InterPro" id="IPR000403">
    <property type="entry name" value="PI3/4_kinase_cat_dom"/>
</dbReference>
<dbReference type="InterPro" id="IPR036940">
    <property type="entry name" value="PI3/4_kinase_cat_sf"/>
</dbReference>
<dbReference type="InterPro" id="IPR018936">
    <property type="entry name" value="PI3/4_kinase_CS"/>
</dbReference>
<dbReference type="InterPro" id="IPR002420">
    <property type="entry name" value="PI3K-type_C2_dom"/>
</dbReference>
<dbReference type="InterPro" id="IPR001263">
    <property type="entry name" value="PI3K_accessory_dom"/>
</dbReference>
<dbReference type="InterPro" id="IPR042236">
    <property type="entry name" value="PI3K_accessory_sf"/>
</dbReference>
<dbReference type="InterPro" id="IPR000341">
    <property type="entry name" value="PI3K_Ras-bd_dom"/>
</dbReference>
<dbReference type="InterPro" id="IPR015433">
    <property type="entry name" value="PI_Kinase"/>
</dbReference>
<dbReference type="InterPro" id="IPR001683">
    <property type="entry name" value="PX_dom"/>
</dbReference>
<dbReference type="InterPro" id="IPR036871">
    <property type="entry name" value="PX_dom_sf"/>
</dbReference>
<dbReference type="InterPro" id="IPR042134">
    <property type="entry name" value="PX_PI3K_C2_beta"/>
</dbReference>
<dbReference type="InterPro" id="IPR029071">
    <property type="entry name" value="Ubiquitin-like_domsf"/>
</dbReference>
<dbReference type="PANTHER" id="PTHR10048:SF30">
    <property type="entry name" value="PHOSPHATIDYLINOSITOL 4-PHOSPHATE 3-KINASE C2 DOMAIN-CONTAINING SUBUNIT BETA"/>
    <property type="match status" value="1"/>
</dbReference>
<dbReference type="PANTHER" id="PTHR10048">
    <property type="entry name" value="PHOSPHATIDYLINOSITOL KINASE"/>
    <property type="match status" value="1"/>
</dbReference>
<dbReference type="Pfam" id="PF00168">
    <property type="entry name" value="C2"/>
    <property type="match status" value="1"/>
</dbReference>
<dbReference type="Pfam" id="PF00454">
    <property type="entry name" value="PI3_PI4_kinase"/>
    <property type="match status" value="1"/>
</dbReference>
<dbReference type="Pfam" id="PF00792">
    <property type="entry name" value="PI3K_C2"/>
    <property type="match status" value="1"/>
</dbReference>
<dbReference type="Pfam" id="PF00794">
    <property type="entry name" value="PI3K_rbd"/>
    <property type="match status" value="1"/>
</dbReference>
<dbReference type="Pfam" id="PF00613">
    <property type="entry name" value="PI3Ka"/>
    <property type="match status" value="1"/>
</dbReference>
<dbReference type="Pfam" id="PF00787">
    <property type="entry name" value="PX"/>
    <property type="match status" value="1"/>
</dbReference>
<dbReference type="SMART" id="SM00239">
    <property type="entry name" value="C2"/>
    <property type="match status" value="1"/>
</dbReference>
<dbReference type="SMART" id="SM00142">
    <property type="entry name" value="PI3K_C2"/>
    <property type="match status" value="1"/>
</dbReference>
<dbReference type="SMART" id="SM00144">
    <property type="entry name" value="PI3K_rbd"/>
    <property type="match status" value="1"/>
</dbReference>
<dbReference type="SMART" id="SM00145">
    <property type="entry name" value="PI3Ka"/>
    <property type="match status" value="1"/>
</dbReference>
<dbReference type="SMART" id="SM00146">
    <property type="entry name" value="PI3Kc"/>
    <property type="match status" value="1"/>
</dbReference>
<dbReference type="SMART" id="SM00312">
    <property type="entry name" value="PX"/>
    <property type="match status" value="1"/>
</dbReference>
<dbReference type="SUPFAM" id="SSF48371">
    <property type="entry name" value="ARM repeat"/>
    <property type="match status" value="1"/>
</dbReference>
<dbReference type="SUPFAM" id="SSF49562">
    <property type="entry name" value="C2 domain (Calcium/lipid-binding domain, CaLB)"/>
    <property type="match status" value="2"/>
</dbReference>
<dbReference type="SUPFAM" id="SSF56112">
    <property type="entry name" value="Protein kinase-like (PK-like)"/>
    <property type="match status" value="1"/>
</dbReference>
<dbReference type="SUPFAM" id="SSF64268">
    <property type="entry name" value="PX domain"/>
    <property type="match status" value="1"/>
</dbReference>
<dbReference type="SUPFAM" id="SSF54236">
    <property type="entry name" value="Ubiquitin-like"/>
    <property type="match status" value="1"/>
</dbReference>
<dbReference type="PROSITE" id="PS50004">
    <property type="entry name" value="C2"/>
    <property type="match status" value="1"/>
</dbReference>
<dbReference type="PROSITE" id="PS51547">
    <property type="entry name" value="C2_PI3K"/>
    <property type="match status" value="1"/>
</dbReference>
<dbReference type="PROSITE" id="PS00915">
    <property type="entry name" value="PI3_4_KINASE_1"/>
    <property type="match status" value="1"/>
</dbReference>
<dbReference type="PROSITE" id="PS00916">
    <property type="entry name" value="PI3_4_KINASE_2"/>
    <property type="match status" value="1"/>
</dbReference>
<dbReference type="PROSITE" id="PS50290">
    <property type="entry name" value="PI3_4_KINASE_3"/>
    <property type="match status" value="1"/>
</dbReference>
<dbReference type="PROSITE" id="PS51546">
    <property type="entry name" value="PI3K_RBD"/>
    <property type="match status" value="1"/>
</dbReference>
<dbReference type="PROSITE" id="PS51545">
    <property type="entry name" value="PIK_HELICAL"/>
    <property type="match status" value="1"/>
</dbReference>
<dbReference type="PROSITE" id="PS50195">
    <property type="entry name" value="PX"/>
    <property type="match status" value="1"/>
</dbReference>
<evidence type="ECO:0000255" key="1">
    <source>
        <dbReference type="PROSITE-ProRule" id="PRU00041"/>
    </source>
</evidence>
<evidence type="ECO:0000255" key="2">
    <source>
        <dbReference type="PROSITE-ProRule" id="PRU00147"/>
    </source>
</evidence>
<evidence type="ECO:0000255" key="3">
    <source>
        <dbReference type="PROSITE-ProRule" id="PRU00269"/>
    </source>
</evidence>
<evidence type="ECO:0000255" key="4">
    <source>
        <dbReference type="PROSITE-ProRule" id="PRU00878"/>
    </source>
</evidence>
<evidence type="ECO:0000255" key="5">
    <source>
        <dbReference type="PROSITE-ProRule" id="PRU00879"/>
    </source>
</evidence>
<evidence type="ECO:0000255" key="6">
    <source>
        <dbReference type="PROSITE-ProRule" id="PRU00880"/>
    </source>
</evidence>
<evidence type="ECO:0000256" key="7">
    <source>
        <dbReference type="SAM" id="MobiDB-lite"/>
    </source>
</evidence>
<evidence type="ECO:0000269" key="8">
    <source>
    </source>
</evidence>
<evidence type="ECO:0000269" key="9">
    <source>
    </source>
</evidence>
<evidence type="ECO:0000269" key="10">
    <source>
    </source>
</evidence>
<evidence type="ECO:0000269" key="11">
    <source>
    </source>
</evidence>
<evidence type="ECO:0000269" key="12">
    <source>
    </source>
</evidence>
<evidence type="ECO:0000305" key="13"/>
<evidence type="ECO:0000305" key="14">
    <source>
    </source>
</evidence>
<proteinExistence type="evidence at protein level"/>